<reference key="1">
    <citation type="journal article" date="2006" name="PLoS Genet.">
        <title>The complete genome sequence and comparative genome analysis of the high pathogenicity Yersinia enterocolitica strain 8081.</title>
        <authorList>
            <person name="Thomson N.R."/>
            <person name="Howard S."/>
            <person name="Wren B.W."/>
            <person name="Holden M.T.G."/>
            <person name="Crossman L."/>
            <person name="Challis G.L."/>
            <person name="Churcher C."/>
            <person name="Mungall K."/>
            <person name="Brooks K."/>
            <person name="Chillingworth T."/>
            <person name="Feltwell T."/>
            <person name="Abdellah Z."/>
            <person name="Hauser H."/>
            <person name="Jagels K."/>
            <person name="Maddison M."/>
            <person name="Moule S."/>
            <person name="Sanders M."/>
            <person name="Whitehead S."/>
            <person name="Quail M.A."/>
            <person name="Dougan G."/>
            <person name="Parkhill J."/>
            <person name="Prentice M.B."/>
        </authorList>
    </citation>
    <scope>NUCLEOTIDE SEQUENCE [LARGE SCALE GENOMIC DNA]</scope>
    <source>
        <strain>NCTC 13174 / 8081</strain>
    </source>
</reference>
<sequence>MLTIGTALRPNATRVMLLGSGELGKEVAIECQRLGLEVIAVDRYADAPAMHVAHRSHVINMLDGAALKRLVAQEKPHYIVPEIEAIATDMLVELENMGQKVVPCAQATRLTMNREGIRLLAAETLQLPTSSYRFADTESAFRQAVSEIGYPCIVKPVMSSSGKGQSLIRSEPQLQAAWDYAQQGGRAGSGKVIVEGLVHFDFEITLLTISAVDGIHFCAPIGHRQEDGDYRESWQPQAMSDVAVARAKEIASQVVKALGGYGLFGVELFVCGDEVIFSEVSPRPHDTGMVTLISQNMSEFALHVRAFLGLPIGTIRQYGAAASAVILPELTSHNIAYHGLETALVGDTQIRLFGKPDIAGKRRLGVALAVADDTDTAIEIAKRAASAVVVTGK</sequence>
<gene>
    <name evidence="1" type="primary">purT</name>
    <name type="ordered locus">YE1784</name>
</gene>
<keyword id="KW-0067">ATP-binding</keyword>
<keyword id="KW-0436">Ligase</keyword>
<keyword id="KW-0460">Magnesium</keyword>
<keyword id="KW-0479">Metal-binding</keyword>
<keyword id="KW-0547">Nucleotide-binding</keyword>
<keyword id="KW-0658">Purine biosynthesis</keyword>
<proteinExistence type="inferred from homology"/>
<accession>A1JLK9</accession>
<dbReference type="EC" id="6.3.1.21" evidence="1"/>
<dbReference type="EMBL" id="AM286415">
    <property type="protein sequence ID" value="CAL11855.1"/>
    <property type="molecule type" value="Genomic_DNA"/>
</dbReference>
<dbReference type="RefSeq" id="WP_011816167.1">
    <property type="nucleotide sequence ID" value="NC_008800.1"/>
</dbReference>
<dbReference type="RefSeq" id="YP_001006059.1">
    <property type="nucleotide sequence ID" value="NC_008800.1"/>
</dbReference>
<dbReference type="SMR" id="A1JLK9"/>
<dbReference type="KEGG" id="yen:YE1784"/>
<dbReference type="PATRIC" id="fig|393305.7.peg.1934"/>
<dbReference type="eggNOG" id="COG0027">
    <property type="taxonomic scope" value="Bacteria"/>
</dbReference>
<dbReference type="HOGENOM" id="CLU_011534_1_3_6"/>
<dbReference type="OrthoDB" id="9804625at2"/>
<dbReference type="UniPathway" id="UPA00074">
    <property type="reaction ID" value="UER00127"/>
</dbReference>
<dbReference type="Proteomes" id="UP000000642">
    <property type="component" value="Chromosome"/>
</dbReference>
<dbReference type="GO" id="GO:0005829">
    <property type="term" value="C:cytosol"/>
    <property type="evidence" value="ECO:0007669"/>
    <property type="project" value="TreeGrafter"/>
</dbReference>
<dbReference type="GO" id="GO:0005524">
    <property type="term" value="F:ATP binding"/>
    <property type="evidence" value="ECO:0007669"/>
    <property type="project" value="UniProtKB-UniRule"/>
</dbReference>
<dbReference type="GO" id="GO:0000287">
    <property type="term" value="F:magnesium ion binding"/>
    <property type="evidence" value="ECO:0007669"/>
    <property type="project" value="InterPro"/>
</dbReference>
<dbReference type="GO" id="GO:0043815">
    <property type="term" value="F:phosphoribosylglycinamide formyltransferase 2 activity"/>
    <property type="evidence" value="ECO:0007669"/>
    <property type="project" value="UniProtKB-UniRule"/>
</dbReference>
<dbReference type="GO" id="GO:0004644">
    <property type="term" value="F:phosphoribosylglycinamide formyltransferase activity"/>
    <property type="evidence" value="ECO:0007669"/>
    <property type="project" value="InterPro"/>
</dbReference>
<dbReference type="GO" id="GO:0006189">
    <property type="term" value="P:'de novo' IMP biosynthetic process"/>
    <property type="evidence" value="ECO:0007669"/>
    <property type="project" value="UniProtKB-UniRule"/>
</dbReference>
<dbReference type="FunFam" id="3.30.1490.20:FF:000013">
    <property type="entry name" value="Formate-dependent phosphoribosylglycinamide formyltransferase"/>
    <property type="match status" value="1"/>
</dbReference>
<dbReference type="FunFam" id="3.30.470.20:FF:000027">
    <property type="entry name" value="Formate-dependent phosphoribosylglycinamide formyltransferase"/>
    <property type="match status" value="1"/>
</dbReference>
<dbReference type="FunFam" id="3.40.50.20:FF:000007">
    <property type="entry name" value="Formate-dependent phosphoribosylglycinamide formyltransferase"/>
    <property type="match status" value="1"/>
</dbReference>
<dbReference type="Gene3D" id="3.40.50.20">
    <property type="match status" value="1"/>
</dbReference>
<dbReference type="Gene3D" id="3.30.1490.20">
    <property type="entry name" value="ATP-grasp fold, A domain"/>
    <property type="match status" value="1"/>
</dbReference>
<dbReference type="Gene3D" id="3.30.470.20">
    <property type="entry name" value="ATP-grasp fold, B domain"/>
    <property type="match status" value="1"/>
</dbReference>
<dbReference type="HAMAP" id="MF_01643">
    <property type="entry name" value="PurT"/>
    <property type="match status" value="1"/>
</dbReference>
<dbReference type="InterPro" id="IPR011761">
    <property type="entry name" value="ATP-grasp"/>
</dbReference>
<dbReference type="InterPro" id="IPR003135">
    <property type="entry name" value="ATP-grasp_carboxylate-amine"/>
</dbReference>
<dbReference type="InterPro" id="IPR013815">
    <property type="entry name" value="ATP_grasp_subdomain_1"/>
</dbReference>
<dbReference type="InterPro" id="IPR016185">
    <property type="entry name" value="PreATP-grasp_dom_sf"/>
</dbReference>
<dbReference type="InterPro" id="IPR005862">
    <property type="entry name" value="PurT"/>
</dbReference>
<dbReference type="InterPro" id="IPR054350">
    <property type="entry name" value="PurT/PurK_preATP-grasp"/>
</dbReference>
<dbReference type="InterPro" id="IPR048740">
    <property type="entry name" value="PurT_C"/>
</dbReference>
<dbReference type="InterPro" id="IPR011054">
    <property type="entry name" value="Rudment_hybrid_motif"/>
</dbReference>
<dbReference type="NCBIfam" id="NF006766">
    <property type="entry name" value="PRK09288.1"/>
    <property type="match status" value="1"/>
</dbReference>
<dbReference type="NCBIfam" id="TIGR01142">
    <property type="entry name" value="purT"/>
    <property type="match status" value="1"/>
</dbReference>
<dbReference type="PANTHER" id="PTHR43055">
    <property type="entry name" value="FORMATE-DEPENDENT PHOSPHORIBOSYLGLYCINAMIDE FORMYLTRANSFERASE"/>
    <property type="match status" value="1"/>
</dbReference>
<dbReference type="PANTHER" id="PTHR43055:SF1">
    <property type="entry name" value="FORMATE-DEPENDENT PHOSPHORIBOSYLGLYCINAMIDE FORMYLTRANSFERASE"/>
    <property type="match status" value="1"/>
</dbReference>
<dbReference type="Pfam" id="PF02222">
    <property type="entry name" value="ATP-grasp"/>
    <property type="match status" value="1"/>
</dbReference>
<dbReference type="Pfam" id="PF21244">
    <property type="entry name" value="PurT_C"/>
    <property type="match status" value="1"/>
</dbReference>
<dbReference type="Pfam" id="PF22660">
    <property type="entry name" value="RS_preATP-grasp-like"/>
    <property type="match status" value="1"/>
</dbReference>
<dbReference type="SUPFAM" id="SSF56059">
    <property type="entry name" value="Glutathione synthetase ATP-binding domain-like"/>
    <property type="match status" value="1"/>
</dbReference>
<dbReference type="SUPFAM" id="SSF52440">
    <property type="entry name" value="PreATP-grasp domain"/>
    <property type="match status" value="1"/>
</dbReference>
<dbReference type="SUPFAM" id="SSF51246">
    <property type="entry name" value="Rudiment single hybrid motif"/>
    <property type="match status" value="1"/>
</dbReference>
<dbReference type="PROSITE" id="PS50975">
    <property type="entry name" value="ATP_GRASP"/>
    <property type="match status" value="1"/>
</dbReference>
<feature type="chain" id="PRO_0000319270" description="Formate-dependent phosphoribosylglycinamide formyltransferase">
    <location>
        <begin position="1"/>
        <end position="393"/>
    </location>
</feature>
<feature type="domain" description="ATP-grasp" evidence="1">
    <location>
        <begin position="119"/>
        <end position="308"/>
    </location>
</feature>
<feature type="binding site" evidence="1">
    <location>
        <begin position="22"/>
        <end position="23"/>
    </location>
    <ligand>
        <name>N(1)-(5-phospho-beta-D-ribosyl)glycinamide</name>
        <dbReference type="ChEBI" id="CHEBI:143788"/>
    </ligand>
</feature>
<feature type="binding site" evidence="1">
    <location>
        <position position="82"/>
    </location>
    <ligand>
        <name>N(1)-(5-phospho-beta-D-ribosyl)glycinamide</name>
        <dbReference type="ChEBI" id="CHEBI:143788"/>
    </ligand>
</feature>
<feature type="binding site" evidence="1">
    <location>
        <position position="114"/>
    </location>
    <ligand>
        <name>ATP</name>
        <dbReference type="ChEBI" id="CHEBI:30616"/>
    </ligand>
</feature>
<feature type="binding site" evidence="1">
    <location>
        <position position="155"/>
    </location>
    <ligand>
        <name>ATP</name>
        <dbReference type="ChEBI" id="CHEBI:30616"/>
    </ligand>
</feature>
<feature type="binding site" evidence="1">
    <location>
        <begin position="160"/>
        <end position="165"/>
    </location>
    <ligand>
        <name>ATP</name>
        <dbReference type="ChEBI" id="CHEBI:30616"/>
    </ligand>
</feature>
<feature type="binding site" evidence="1">
    <location>
        <begin position="195"/>
        <end position="198"/>
    </location>
    <ligand>
        <name>ATP</name>
        <dbReference type="ChEBI" id="CHEBI:30616"/>
    </ligand>
</feature>
<feature type="binding site" evidence="1">
    <location>
        <position position="203"/>
    </location>
    <ligand>
        <name>ATP</name>
        <dbReference type="ChEBI" id="CHEBI:30616"/>
    </ligand>
</feature>
<feature type="binding site" evidence="1">
    <location>
        <position position="267"/>
    </location>
    <ligand>
        <name>Mg(2+)</name>
        <dbReference type="ChEBI" id="CHEBI:18420"/>
    </ligand>
</feature>
<feature type="binding site" evidence="1">
    <location>
        <position position="279"/>
    </location>
    <ligand>
        <name>Mg(2+)</name>
        <dbReference type="ChEBI" id="CHEBI:18420"/>
    </ligand>
</feature>
<feature type="binding site" evidence="1">
    <location>
        <position position="286"/>
    </location>
    <ligand>
        <name>N(1)-(5-phospho-beta-D-ribosyl)glycinamide</name>
        <dbReference type="ChEBI" id="CHEBI:143788"/>
    </ligand>
</feature>
<feature type="binding site" evidence="1">
    <location>
        <position position="355"/>
    </location>
    <ligand>
        <name>N(1)-(5-phospho-beta-D-ribosyl)glycinamide</name>
        <dbReference type="ChEBI" id="CHEBI:143788"/>
    </ligand>
</feature>
<feature type="binding site" evidence="1">
    <location>
        <begin position="362"/>
        <end position="363"/>
    </location>
    <ligand>
        <name>N(1)-(5-phospho-beta-D-ribosyl)glycinamide</name>
        <dbReference type="ChEBI" id="CHEBI:143788"/>
    </ligand>
</feature>
<name>PURT_YERE8</name>
<evidence type="ECO:0000255" key="1">
    <source>
        <dbReference type="HAMAP-Rule" id="MF_01643"/>
    </source>
</evidence>
<protein>
    <recommendedName>
        <fullName evidence="1">Formate-dependent phosphoribosylglycinamide formyltransferase</fullName>
        <ecNumber evidence="1">6.3.1.21</ecNumber>
    </recommendedName>
    <alternativeName>
        <fullName evidence="1">5'-phosphoribosylglycinamide transformylase 2</fullName>
    </alternativeName>
    <alternativeName>
        <fullName evidence="1">Formate-dependent GAR transformylase</fullName>
    </alternativeName>
    <alternativeName>
        <fullName evidence="1">GAR transformylase 2</fullName>
        <shortName evidence="1">GART 2</shortName>
    </alternativeName>
    <alternativeName>
        <fullName evidence="1">Non-folate glycinamide ribonucleotide transformylase</fullName>
    </alternativeName>
    <alternativeName>
        <fullName evidence="1">Phosphoribosylglycinamide formyltransferase 2</fullName>
    </alternativeName>
</protein>
<comment type="function">
    <text evidence="1">Involved in the de novo purine biosynthesis. Catalyzes the transfer of formate to 5-phospho-ribosyl-glycinamide (GAR), producing 5-phospho-ribosyl-N-formylglycinamide (FGAR). Formate is provided by PurU via hydrolysis of 10-formyl-tetrahydrofolate.</text>
</comment>
<comment type="catalytic activity">
    <reaction evidence="1">
        <text>N(1)-(5-phospho-beta-D-ribosyl)glycinamide + formate + ATP = N(2)-formyl-N(1)-(5-phospho-beta-D-ribosyl)glycinamide + ADP + phosphate + H(+)</text>
        <dbReference type="Rhea" id="RHEA:24829"/>
        <dbReference type="ChEBI" id="CHEBI:15378"/>
        <dbReference type="ChEBI" id="CHEBI:15740"/>
        <dbReference type="ChEBI" id="CHEBI:30616"/>
        <dbReference type="ChEBI" id="CHEBI:43474"/>
        <dbReference type="ChEBI" id="CHEBI:143788"/>
        <dbReference type="ChEBI" id="CHEBI:147286"/>
        <dbReference type="ChEBI" id="CHEBI:456216"/>
        <dbReference type="EC" id="6.3.1.21"/>
    </reaction>
    <physiologicalReaction direction="left-to-right" evidence="1">
        <dbReference type="Rhea" id="RHEA:24830"/>
    </physiologicalReaction>
</comment>
<comment type="pathway">
    <text evidence="1">Purine metabolism; IMP biosynthesis via de novo pathway; N(2)-formyl-N(1)-(5-phospho-D-ribosyl)glycinamide from N(1)-(5-phospho-D-ribosyl)glycinamide (formate route): step 1/1.</text>
</comment>
<comment type="subunit">
    <text evidence="1">Homodimer.</text>
</comment>
<comment type="similarity">
    <text evidence="1">Belongs to the PurK/PurT family.</text>
</comment>
<organism>
    <name type="scientific">Yersinia enterocolitica serotype O:8 / biotype 1B (strain NCTC 13174 / 8081)</name>
    <dbReference type="NCBI Taxonomy" id="393305"/>
    <lineage>
        <taxon>Bacteria</taxon>
        <taxon>Pseudomonadati</taxon>
        <taxon>Pseudomonadota</taxon>
        <taxon>Gammaproteobacteria</taxon>
        <taxon>Enterobacterales</taxon>
        <taxon>Yersiniaceae</taxon>
        <taxon>Yersinia</taxon>
    </lineage>
</organism>